<sequence length="193" mass="21305">MRLTDIEIEQALDNGTIVIEPRPGIEAISGVSVDVRLGGQFRVFKDHTAPYIDLSGPSVEMQAALDRVMSEIIEIPDGEAFFLHPGELALAVTYESVTLPADIVGWLDGRSSLARLGLMVHVTAHRIDPGWQGKIVLEFYNSGKLPLALRPRMTIGALNFERLNHAVARPYNTRKSAKYKDQQEAVASRISQD</sequence>
<accession>A3D5E2</accession>
<reference key="1">
    <citation type="submission" date="2007-02" db="EMBL/GenBank/DDBJ databases">
        <title>Complete sequence of chromosome of Shewanella baltica OS155.</title>
        <authorList>
            <consortium name="US DOE Joint Genome Institute"/>
            <person name="Copeland A."/>
            <person name="Lucas S."/>
            <person name="Lapidus A."/>
            <person name="Barry K."/>
            <person name="Detter J.C."/>
            <person name="Glavina del Rio T."/>
            <person name="Hammon N."/>
            <person name="Israni S."/>
            <person name="Dalin E."/>
            <person name="Tice H."/>
            <person name="Pitluck S."/>
            <person name="Sims D.R."/>
            <person name="Brettin T."/>
            <person name="Bruce D."/>
            <person name="Han C."/>
            <person name="Tapia R."/>
            <person name="Brainard J."/>
            <person name="Schmutz J."/>
            <person name="Larimer F."/>
            <person name="Land M."/>
            <person name="Hauser L."/>
            <person name="Kyrpides N."/>
            <person name="Mikhailova N."/>
            <person name="Brettar I."/>
            <person name="Klappenbach J."/>
            <person name="Konstantinidis K."/>
            <person name="Rodrigues J."/>
            <person name="Tiedje J."/>
            <person name="Richardson P."/>
        </authorList>
    </citation>
    <scope>NUCLEOTIDE SEQUENCE [LARGE SCALE GENOMIC DNA]</scope>
    <source>
        <strain>OS155 / ATCC BAA-1091</strain>
    </source>
</reference>
<organism>
    <name type="scientific">Shewanella baltica (strain OS155 / ATCC BAA-1091)</name>
    <dbReference type="NCBI Taxonomy" id="325240"/>
    <lineage>
        <taxon>Bacteria</taxon>
        <taxon>Pseudomonadati</taxon>
        <taxon>Pseudomonadota</taxon>
        <taxon>Gammaproteobacteria</taxon>
        <taxon>Alteromonadales</taxon>
        <taxon>Shewanellaceae</taxon>
        <taxon>Shewanella</taxon>
    </lineage>
</organism>
<gene>
    <name evidence="1" type="primary">dcd</name>
    <name type="ordered locus">Sbal_2462</name>
</gene>
<proteinExistence type="inferred from homology"/>
<name>DCD_SHEB5</name>
<comment type="function">
    <text evidence="1">Catalyzes the deamination of dCTP to dUTP.</text>
</comment>
<comment type="catalytic activity">
    <reaction evidence="1">
        <text>dCTP + H2O + H(+) = dUTP + NH4(+)</text>
        <dbReference type="Rhea" id="RHEA:22680"/>
        <dbReference type="ChEBI" id="CHEBI:15377"/>
        <dbReference type="ChEBI" id="CHEBI:15378"/>
        <dbReference type="ChEBI" id="CHEBI:28938"/>
        <dbReference type="ChEBI" id="CHEBI:61481"/>
        <dbReference type="ChEBI" id="CHEBI:61555"/>
        <dbReference type="EC" id="3.5.4.13"/>
    </reaction>
</comment>
<comment type="pathway">
    <text evidence="1">Pyrimidine metabolism; dUMP biosynthesis; dUMP from dCTP (dUTP route): step 1/2.</text>
</comment>
<comment type="subunit">
    <text evidence="1">Homotrimer.</text>
</comment>
<comment type="similarity">
    <text evidence="1">Belongs to the dCTP deaminase family.</text>
</comment>
<protein>
    <recommendedName>
        <fullName evidence="1">dCTP deaminase</fullName>
        <ecNumber evidence="1">3.5.4.13</ecNumber>
    </recommendedName>
    <alternativeName>
        <fullName evidence="1">Deoxycytidine triphosphate deaminase</fullName>
    </alternativeName>
</protein>
<evidence type="ECO:0000255" key="1">
    <source>
        <dbReference type="HAMAP-Rule" id="MF_00146"/>
    </source>
</evidence>
<evidence type="ECO:0000256" key="2">
    <source>
        <dbReference type="SAM" id="MobiDB-lite"/>
    </source>
</evidence>
<dbReference type="EC" id="3.5.4.13" evidence="1"/>
<dbReference type="EMBL" id="CP000563">
    <property type="protein sequence ID" value="ABN61955.1"/>
    <property type="molecule type" value="Genomic_DNA"/>
</dbReference>
<dbReference type="RefSeq" id="WP_006081925.1">
    <property type="nucleotide sequence ID" value="NC_009052.1"/>
</dbReference>
<dbReference type="SMR" id="A3D5E2"/>
<dbReference type="STRING" id="325240.Sbal_2462"/>
<dbReference type="GeneID" id="11772674"/>
<dbReference type="KEGG" id="sbl:Sbal_2462"/>
<dbReference type="HOGENOM" id="CLU_087476_2_0_6"/>
<dbReference type="OrthoDB" id="9780956at2"/>
<dbReference type="UniPathway" id="UPA00610">
    <property type="reaction ID" value="UER00665"/>
</dbReference>
<dbReference type="Proteomes" id="UP000001557">
    <property type="component" value="Chromosome"/>
</dbReference>
<dbReference type="GO" id="GO:0008829">
    <property type="term" value="F:dCTP deaminase activity"/>
    <property type="evidence" value="ECO:0007669"/>
    <property type="project" value="UniProtKB-UniRule"/>
</dbReference>
<dbReference type="GO" id="GO:0000166">
    <property type="term" value="F:nucleotide binding"/>
    <property type="evidence" value="ECO:0007669"/>
    <property type="project" value="UniProtKB-KW"/>
</dbReference>
<dbReference type="GO" id="GO:0006226">
    <property type="term" value="P:dUMP biosynthetic process"/>
    <property type="evidence" value="ECO:0007669"/>
    <property type="project" value="UniProtKB-UniPathway"/>
</dbReference>
<dbReference type="GO" id="GO:0006229">
    <property type="term" value="P:dUTP biosynthetic process"/>
    <property type="evidence" value="ECO:0007669"/>
    <property type="project" value="UniProtKB-UniRule"/>
</dbReference>
<dbReference type="GO" id="GO:0015949">
    <property type="term" value="P:nucleobase-containing small molecule interconversion"/>
    <property type="evidence" value="ECO:0007669"/>
    <property type="project" value="TreeGrafter"/>
</dbReference>
<dbReference type="CDD" id="cd07557">
    <property type="entry name" value="trimeric_dUTPase"/>
    <property type="match status" value="1"/>
</dbReference>
<dbReference type="FunFam" id="2.70.40.10:FF:000003">
    <property type="entry name" value="dCTP deaminase"/>
    <property type="match status" value="1"/>
</dbReference>
<dbReference type="Gene3D" id="2.70.40.10">
    <property type="match status" value="1"/>
</dbReference>
<dbReference type="HAMAP" id="MF_00146">
    <property type="entry name" value="dCTP_deaminase"/>
    <property type="match status" value="1"/>
</dbReference>
<dbReference type="InterPro" id="IPR011962">
    <property type="entry name" value="dCTP_deaminase"/>
</dbReference>
<dbReference type="InterPro" id="IPR036157">
    <property type="entry name" value="dUTPase-like_sf"/>
</dbReference>
<dbReference type="InterPro" id="IPR033704">
    <property type="entry name" value="dUTPase_trimeric"/>
</dbReference>
<dbReference type="NCBIfam" id="TIGR02274">
    <property type="entry name" value="dCTP_deam"/>
    <property type="match status" value="1"/>
</dbReference>
<dbReference type="PANTHER" id="PTHR42680">
    <property type="entry name" value="DCTP DEAMINASE"/>
    <property type="match status" value="1"/>
</dbReference>
<dbReference type="PANTHER" id="PTHR42680:SF3">
    <property type="entry name" value="DCTP DEAMINASE"/>
    <property type="match status" value="1"/>
</dbReference>
<dbReference type="Pfam" id="PF22769">
    <property type="entry name" value="DCD"/>
    <property type="match status" value="1"/>
</dbReference>
<dbReference type="SUPFAM" id="SSF51283">
    <property type="entry name" value="dUTPase-like"/>
    <property type="match status" value="1"/>
</dbReference>
<keyword id="KW-0378">Hydrolase</keyword>
<keyword id="KW-0546">Nucleotide metabolism</keyword>
<keyword id="KW-0547">Nucleotide-binding</keyword>
<keyword id="KW-1185">Reference proteome</keyword>
<feature type="chain" id="PRO_1000009807" description="dCTP deaminase">
    <location>
        <begin position="1"/>
        <end position="193"/>
    </location>
</feature>
<feature type="region of interest" description="Disordered" evidence="2">
    <location>
        <begin position="174"/>
        <end position="193"/>
    </location>
</feature>
<feature type="active site" description="Proton donor/acceptor" evidence="1">
    <location>
        <position position="138"/>
    </location>
</feature>
<feature type="binding site" evidence="1">
    <location>
        <begin position="110"/>
        <end position="115"/>
    </location>
    <ligand>
        <name>dCTP</name>
        <dbReference type="ChEBI" id="CHEBI:61481"/>
    </ligand>
</feature>
<feature type="binding site" evidence="1">
    <location>
        <position position="128"/>
    </location>
    <ligand>
        <name>dCTP</name>
        <dbReference type="ChEBI" id="CHEBI:61481"/>
    </ligand>
</feature>
<feature type="binding site" evidence="1">
    <location>
        <begin position="136"/>
        <end position="138"/>
    </location>
    <ligand>
        <name>dCTP</name>
        <dbReference type="ChEBI" id="CHEBI:61481"/>
    </ligand>
</feature>
<feature type="binding site" evidence="1">
    <location>
        <position position="171"/>
    </location>
    <ligand>
        <name>dCTP</name>
        <dbReference type="ChEBI" id="CHEBI:61481"/>
    </ligand>
</feature>
<feature type="binding site" evidence="1">
    <location>
        <position position="178"/>
    </location>
    <ligand>
        <name>dCTP</name>
        <dbReference type="ChEBI" id="CHEBI:61481"/>
    </ligand>
</feature>
<feature type="binding site" evidence="1">
    <location>
        <position position="182"/>
    </location>
    <ligand>
        <name>dCTP</name>
        <dbReference type="ChEBI" id="CHEBI:61481"/>
    </ligand>
</feature>